<accession>A7Y3G5</accession>
<geneLocation type="chloroplast"/>
<name>PSAJ_IPOPU</name>
<keyword id="KW-0150">Chloroplast</keyword>
<keyword id="KW-0472">Membrane</keyword>
<keyword id="KW-0602">Photosynthesis</keyword>
<keyword id="KW-0603">Photosystem I</keyword>
<keyword id="KW-0934">Plastid</keyword>
<keyword id="KW-0793">Thylakoid</keyword>
<keyword id="KW-0812">Transmembrane</keyword>
<keyword id="KW-1133">Transmembrane helix</keyword>
<organism>
    <name type="scientific">Ipomoea purpurea</name>
    <name type="common">Common morning glory</name>
    <name type="synonym">Pharbitis purpurea</name>
    <dbReference type="NCBI Taxonomy" id="4121"/>
    <lineage>
        <taxon>Eukaryota</taxon>
        <taxon>Viridiplantae</taxon>
        <taxon>Streptophyta</taxon>
        <taxon>Embryophyta</taxon>
        <taxon>Tracheophyta</taxon>
        <taxon>Spermatophyta</taxon>
        <taxon>Magnoliopsida</taxon>
        <taxon>eudicotyledons</taxon>
        <taxon>Gunneridae</taxon>
        <taxon>Pentapetalae</taxon>
        <taxon>asterids</taxon>
        <taxon>lamiids</taxon>
        <taxon>Solanales</taxon>
        <taxon>Convolvulaceae</taxon>
        <taxon>Ipomoeeae</taxon>
        <taxon>Ipomoea</taxon>
    </lineage>
</organism>
<evidence type="ECO:0000255" key="1">
    <source>
        <dbReference type="HAMAP-Rule" id="MF_00522"/>
    </source>
</evidence>
<sequence>MRDFKTYLSVAPVLSTLWFGALAGLLIEINRFFPDALTFPFFSF</sequence>
<comment type="function">
    <text evidence="1">May help in the organization of the PsaE and PsaF subunits.</text>
</comment>
<comment type="subcellular location">
    <subcellularLocation>
        <location evidence="1">Plastid</location>
        <location evidence="1">Chloroplast thylakoid membrane</location>
        <topology evidence="1">Single-pass membrane protein</topology>
    </subcellularLocation>
</comment>
<comment type="similarity">
    <text evidence="1">Belongs to the PsaJ family.</text>
</comment>
<reference key="1">
    <citation type="journal article" date="2007" name="BMC Plant Biol.">
        <title>Complete plastid genome sequences suggest strong selection for retention of photosynthetic genes in the parasitic plant genus Cuscuta.</title>
        <authorList>
            <person name="McNeal J.R."/>
            <person name="Kuehl J.V."/>
            <person name="Boore J.L."/>
            <person name="dePamphilis C.W."/>
        </authorList>
    </citation>
    <scope>NUCLEOTIDE SEQUENCE [LARGE SCALE GENOMIC DNA]</scope>
</reference>
<feature type="chain" id="PRO_0000354152" description="Photosystem I reaction center subunit IX">
    <location>
        <begin position="1"/>
        <end position="44"/>
    </location>
</feature>
<feature type="transmembrane region" description="Helical" evidence="1">
    <location>
        <begin position="7"/>
        <end position="27"/>
    </location>
</feature>
<protein>
    <recommendedName>
        <fullName evidence="1">Photosystem I reaction center subunit IX</fullName>
    </recommendedName>
    <alternativeName>
        <fullName evidence="1">PSI-J</fullName>
    </alternativeName>
</protein>
<gene>
    <name evidence="1" type="primary">psaJ</name>
</gene>
<dbReference type="EMBL" id="EU118126">
    <property type="protein sequence ID" value="ABV02368.1"/>
    <property type="molecule type" value="Genomic_DNA"/>
</dbReference>
<dbReference type="RefSeq" id="YP_001468328.1">
    <property type="nucleotide sequence ID" value="NC_009808.1"/>
</dbReference>
<dbReference type="SMR" id="A7Y3G5"/>
<dbReference type="GeneID" id="5601221"/>
<dbReference type="GO" id="GO:0009535">
    <property type="term" value="C:chloroplast thylakoid membrane"/>
    <property type="evidence" value="ECO:0007669"/>
    <property type="project" value="UniProtKB-SubCell"/>
</dbReference>
<dbReference type="GO" id="GO:0009522">
    <property type="term" value="C:photosystem I"/>
    <property type="evidence" value="ECO:0007669"/>
    <property type="project" value="UniProtKB-KW"/>
</dbReference>
<dbReference type="GO" id="GO:0015979">
    <property type="term" value="P:photosynthesis"/>
    <property type="evidence" value="ECO:0007669"/>
    <property type="project" value="UniProtKB-UniRule"/>
</dbReference>
<dbReference type="FunFam" id="1.20.5.510:FF:000001">
    <property type="entry name" value="Photosystem I reaction center subunit IX"/>
    <property type="match status" value="1"/>
</dbReference>
<dbReference type="Gene3D" id="1.20.5.510">
    <property type="entry name" value="Single helix bin"/>
    <property type="match status" value="1"/>
</dbReference>
<dbReference type="HAMAP" id="MF_00522">
    <property type="entry name" value="PSI_PsaJ"/>
    <property type="match status" value="1"/>
</dbReference>
<dbReference type="InterPro" id="IPR002615">
    <property type="entry name" value="PSI_PsaJ"/>
</dbReference>
<dbReference type="InterPro" id="IPR036062">
    <property type="entry name" value="PSI_PsaJ_sf"/>
</dbReference>
<dbReference type="PANTHER" id="PTHR36082">
    <property type="match status" value="1"/>
</dbReference>
<dbReference type="PANTHER" id="PTHR36082:SF2">
    <property type="entry name" value="PHOTOSYSTEM I REACTION CENTER SUBUNIT IX"/>
    <property type="match status" value="1"/>
</dbReference>
<dbReference type="Pfam" id="PF01701">
    <property type="entry name" value="PSI_PsaJ"/>
    <property type="match status" value="1"/>
</dbReference>
<dbReference type="SUPFAM" id="SSF81544">
    <property type="entry name" value="Subunit IX of photosystem I reaction centre, PsaJ"/>
    <property type="match status" value="1"/>
</dbReference>
<proteinExistence type="inferred from homology"/>